<keyword id="KW-0963">Cytoplasm</keyword>
<keyword id="KW-0489">Methyltransferase</keyword>
<keyword id="KW-0698">rRNA processing</keyword>
<keyword id="KW-0949">S-adenosyl-L-methionine</keyword>
<keyword id="KW-0808">Transferase</keyword>
<reference key="1">
    <citation type="journal article" date="2007" name="Genome Biol.">
        <title>Characterization and modeling of the Haemophilus influenzae core and supragenomes based on the complete genomic sequences of Rd and 12 clinical nontypeable strains.</title>
        <authorList>
            <person name="Hogg J.S."/>
            <person name="Hu F.Z."/>
            <person name="Janto B."/>
            <person name="Boissy R."/>
            <person name="Hayes J."/>
            <person name="Keefe R."/>
            <person name="Post J.C."/>
            <person name="Ehrlich G.D."/>
        </authorList>
    </citation>
    <scope>NUCLEOTIDE SEQUENCE [LARGE SCALE GENOMIC DNA]</scope>
    <source>
        <strain>PittGG</strain>
    </source>
</reference>
<sequence>MNSENSFSSSEHITVLLHEAVNGLALKENGIYIDGTFGRGGHSRFILSQLSSNGRLIAVDRDPRAIAEAHKIQDLRFQIEHNSFSHIPEICDKLNLVGKIDGILLDLGVSSPQLDEAERGFSFMKDGPLDMRMDTTQGLSAEEWLKQVSIEDLTWVLKTFGEERFAKRIATAIVDFNKSAVKNGTEFLSRTSQLAELISQAVPFKDKHKHPATRSFQAIRIFINSELDELESLLNSALDMLAPEGRLSIISFHSLEDRMVKHFMKNKVRARIFPKVYHCEKIKFSVIKN</sequence>
<gene>
    <name evidence="1" type="primary">rsmH</name>
    <name type="synonym">mraW</name>
    <name type="ordered locus">CGSHiGG_09305</name>
</gene>
<name>RSMH_HAEIG</name>
<organism>
    <name type="scientific">Haemophilus influenzae (strain PittGG)</name>
    <dbReference type="NCBI Taxonomy" id="374931"/>
    <lineage>
        <taxon>Bacteria</taxon>
        <taxon>Pseudomonadati</taxon>
        <taxon>Pseudomonadota</taxon>
        <taxon>Gammaproteobacteria</taxon>
        <taxon>Pasteurellales</taxon>
        <taxon>Pasteurellaceae</taxon>
        <taxon>Haemophilus</taxon>
    </lineage>
</organism>
<proteinExistence type="inferred from homology"/>
<protein>
    <recommendedName>
        <fullName evidence="1">Ribosomal RNA small subunit methyltransferase H</fullName>
        <ecNumber evidence="1">2.1.1.199</ecNumber>
    </recommendedName>
    <alternativeName>
        <fullName evidence="1">16S rRNA m(4)C1402 methyltransferase</fullName>
    </alternativeName>
    <alternativeName>
        <fullName evidence="1">rRNA (cytosine-N(4)-)-methyltransferase RsmH</fullName>
    </alternativeName>
</protein>
<evidence type="ECO:0000255" key="1">
    <source>
        <dbReference type="HAMAP-Rule" id="MF_01007"/>
    </source>
</evidence>
<comment type="function">
    <text evidence="1">Specifically methylates the N4 position of cytidine in position 1402 (C1402) of 16S rRNA.</text>
</comment>
<comment type="catalytic activity">
    <reaction evidence="1">
        <text>cytidine(1402) in 16S rRNA + S-adenosyl-L-methionine = N(4)-methylcytidine(1402) in 16S rRNA + S-adenosyl-L-homocysteine + H(+)</text>
        <dbReference type="Rhea" id="RHEA:42928"/>
        <dbReference type="Rhea" id="RHEA-COMP:10286"/>
        <dbReference type="Rhea" id="RHEA-COMP:10287"/>
        <dbReference type="ChEBI" id="CHEBI:15378"/>
        <dbReference type="ChEBI" id="CHEBI:57856"/>
        <dbReference type="ChEBI" id="CHEBI:59789"/>
        <dbReference type="ChEBI" id="CHEBI:74506"/>
        <dbReference type="ChEBI" id="CHEBI:82748"/>
        <dbReference type="EC" id="2.1.1.199"/>
    </reaction>
</comment>
<comment type="subcellular location">
    <subcellularLocation>
        <location evidence="1">Cytoplasm</location>
    </subcellularLocation>
</comment>
<comment type="similarity">
    <text evidence="1">Belongs to the methyltransferase superfamily. RsmH family.</text>
</comment>
<feature type="chain" id="PRO_0000386918" description="Ribosomal RNA small subunit methyltransferase H">
    <location>
        <begin position="1"/>
        <end position="289"/>
    </location>
</feature>
<feature type="binding site" evidence="1">
    <location>
        <begin position="40"/>
        <end position="42"/>
    </location>
    <ligand>
        <name>S-adenosyl-L-methionine</name>
        <dbReference type="ChEBI" id="CHEBI:59789"/>
    </ligand>
</feature>
<feature type="binding site" evidence="1">
    <location>
        <position position="60"/>
    </location>
    <ligand>
        <name>S-adenosyl-L-methionine</name>
        <dbReference type="ChEBI" id="CHEBI:59789"/>
    </ligand>
</feature>
<feature type="binding site" evidence="1">
    <location>
        <position position="84"/>
    </location>
    <ligand>
        <name>S-adenosyl-L-methionine</name>
        <dbReference type="ChEBI" id="CHEBI:59789"/>
    </ligand>
</feature>
<feature type="binding site" evidence="1">
    <location>
        <position position="106"/>
    </location>
    <ligand>
        <name>S-adenosyl-L-methionine</name>
        <dbReference type="ChEBI" id="CHEBI:59789"/>
    </ligand>
</feature>
<feature type="binding site" evidence="1">
    <location>
        <position position="113"/>
    </location>
    <ligand>
        <name>S-adenosyl-L-methionine</name>
        <dbReference type="ChEBI" id="CHEBI:59789"/>
    </ligand>
</feature>
<dbReference type="EC" id="2.1.1.199" evidence="1"/>
<dbReference type="EMBL" id="CP000672">
    <property type="protein sequence ID" value="ABR00659.1"/>
    <property type="molecule type" value="Genomic_DNA"/>
</dbReference>
<dbReference type="SMR" id="A5UIQ3"/>
<dbReference type="KEGG" id="hiq:CGSHiGG_09305"/>
<dbReference type="HOGENOM" id="CLU_038422_2_0_6"/>
<dbReference type="Proteomes" id="UP000001990">
    <property type="component" value="Chromosome"/>
</dbReference>
<dbReference type="GO" id="GO:0005737">
    <property type="term" value="C:cytoplasm"/>
    <property type="evidence" value="ECO:0007669"/>
    <property type="project" value="UniProtKB-SubCell"/>
</dbReference>
<dbReference type="GO" id="GO:0071424">
    <property type="term" value="F:rRNA (cytosine-N4-)-methyltransferase activity"/>
    <property type="evidence" value="ECO:0007669"/>
    <property type="project" value="UniProtKB-UniRule"/>
</dbReference>
<dbReference type="GO" id="GO:0070475">
    <property type="term" value="P:rRNA base methylation"/>
    <property type="evidence" value="ECO:0007669"/>
    <property type="project" value="UniProtKB-UniRule"/>
</dbReference>
<dbReference type="FunFam" id="1.10.150.170:FF:000001">
    <property type="entry name" value="Ribosomal RNA small subunit methyltransferase H"/>
    <property type="match status" value="1"/>
</dbReference>
<dbReference type="Gene3D" id="1.10.150.170">
    <property type="entry name" value="Putative methyltransferase TM0872, insert domain"/>
    <property type="match status" value="1"/>
</dbReference>
<dbReference type="Gene3D" id="3.40.50.150">
    <property type="entry name" value="Vaccinia Virus protein VP39"/>
    <property type="match status" value="1"/>
</dbReference>
<dbReference type="HAMAP" id="MF_01007">
    <property type="entry name" value="16SrRNA_methyltr_H"/>
    <property type="match status" value="1"/>
</dbReference>
<dbReference type="InterPro" id="IPR002903">
    <property type="entry name" value="RsmH"/>
</dbReference>
<dbReference type="InterPro" id="IPR023397">
    <property type="entry name" value="SAM-dep_MeTrfase_MraW_recog"/>
</dbReference>
<dbReference type="InterPro" id="IPR029063">
    <property type="entry name" value="SAM-dependent_MTases_sf"/>
</dbReference>
<dbReference type="NCBIfam" id="TIGR00006">
    <property type="entry name" value="16S rRNA (cytosine(1402)-N(4))-methyltransferase RsmH"/>
    <property type="match status" value="1"/>
</dbReference>
<dbReference type="PANTHER" id="PTHR11265:SF0">
    <property type="entry name" value="12S RRNA N4-METHYLCYTIDINE METHYLTRANSFERASE"/>
    <property type="match status" value="1"/>
</dbReference>
<dbReference type="PANTHER" id="PTHR11265">
    <property type="entry name" value="S-ADENOSYL-METHYLTRANSFERASE MRAW"/>
    <property type="match status" value="1"/>
</dbReference>
<dbReference type="Pfam" id="PF01795">
    <property type="entry name" value="Methyltransf_5"/>
    <property type="match status" value="1"/>
</dbReference>
<dbReference type="PIRSF" id="PIRSF004486">
    <property type="entry name" value="MraW"/>
    <property type="match status" value="1"/>
</dbReference>
<dbReference type="SUPFAM" id="SSF81799">
    <property type="entry name" value="Putative methyltransferase TM0872, insert domain"/>
    <property type="match status" value="1"/>
</dbReference>
<dbReference type="SUPFAM" id="SSF53335">
    <property type="entry name" value="S-adenosyl-L-methionine-dependent methyltransferases"/>
    <property type="match status" value="1"/>
</dbReference>
<accession>A5UIQ3</accession>